<comment type="function">
    <text evidence="1 2">Antiporter that exchanges vesicular protons for cytosolic 4-aminobutanoate or to a lesser extend glycine, thus allowing their secretion from nerve terminals. The transport is equally dependent on the chemical and electrical components of the proton gradient (By similarity). May also transport beta-alanine (By similarity). Acidification of GABAergic synaptic vesicles is a prerequisite for 4-aminobutanoate uptake (By similarity).</text>
</comment>
<comment type="catalytic activity">
    <reaction evidence="2">
        <text>4-aminobutanoate(out) + n H(+)(in) = 4-aminobutanoate(in) + n H(+)(out)</text>
        <dbReference type="Rhea" id="RHEA:70979"/>
        <dbReference type="ChEBI" id="CHEBI:15378"/>
        <dbReference type="ChEBI" id="CHEBI:59888"/>
    </reaction>
</comment>
<comment type="catalytic activity">
    <reaction evidence="2">
        <text>glycine(out) + n H(+)(in) = glycine(in) + n H(+)(out)</text>
        <dbReference type="Rhea" id="RHEA:70983"/>
        <dbReference type="ChEBI" id="CHEBI:15378"/>
        <dbReference type="ChEBI" id="CHEBI:57305"/>
    </reaction>
</comment>
<comment type="catalytic activity">
    <reaction evidence="1">
        <text>beta-alanine(out) + n H(+)(in) = beta-alanine(in) + n H(+)(out)</text>
        <dbReference type="Rhea" id="RHEA:70987"/>
        <dbReference type="ChEBI" id="CHEBI:15378"/>
        <dbReference type="ChEBI" id="CHEBI:57966"/>
    </reaction>
</comment>
<comment type="subcellular location">
    <subcellularLocation>
        <location evidence="1">Cytoplasmic vesicle membrane</location>
        <topology evidence="5">Multi-pass membrane protein</topology>
    </subcellularLocation>
    <subcellularLocation>
        <location evidence="2">Presynapse</location>
    </subcellularLocation>
    <text evidence="1">Presents in glycine-, GABA- or GABA- and glycine-containing boutons.</text>
</comment>
<comment type="similarity">
    <text evidence="5">Belongs to the amino acid/polyamine transporter 2 family.</text>
</comment>
<comment type="caution">
    <text evidence="1 2">Juge et al. shows that SLC32A1 is a symporter of both 4-aminobutanoate or glycine or beta-alanine with Cl(-) that operates according an electrical gradient without the need for a chemical gradient (By similarity). However Farsi et al. and Egashira et al. confirm that SLC32A1 is an antiporter that exchanges vesicular protons for cytosolic 4-aminobutanoate or glycine and exclude any coupling with chloride (By similarity).</text>
</comment>
<evidence type="ECO:0000250" key="1">
    <source>
        <dbReference type="UniProtKB" id="O35458"/>
    </source>
</evidence>
<evidence type="ECO:0000250" key="2">
    <source>
        <dbReference type="UniProtKB" id="O35633"/>
    </source>
</evidence>
<evidence type="ECO:0000250" key="3">
    <source>
        <dbReference type="UniProtKB" id="Q6PF45"/>
    </source>
</evidence>
<evidence type="ECO:0000250" key="4">
    <source>
        <dbReference type="UniProtKB" id="Q9H598"/>
    </source>
</evidence>
<evidence type="ECO:0000255" key="5"/>
<evidence type="ECO:0000256" key="6">
    <source>
        <dbReference type="SAM" id="MobiDB-lite"/>
    </source>
</evidence>
<evidence type="ECO:0000312" key="7">
    <source>
        <dbReference type="EMBL" id="AAH75429.1"/>
    </source>
</evidence>
<proteinExistence type="evidence at transcript level"/>
<keyword id="KW-0966">Cell projection</keyword>
<keyword id="KW-0968">Cytoplasmic vesicle</keyword>
<keyword id="KW-0472">Membrane</keyword>
<keyword id="KW-0532">Neurotransmitter transport</keyword>
<keyword id="KW-1185">Reference proteome</keyword>
<keyword id="KW-0770">Synapse</keyword>
<keyword id="KW-0812">Transmembrane</keyword>
<keyword id="KW-1133">Transmembrane helix</keyword>
<keyword id="KW-0813">Transport</keyword>
<gene>
    <name evidence="7" type="primary">slc32a1</name>
    <name evidence="3" type="synonym">viaat</name>
</gene>
<accession>Q6DIV6</accession>
<organism>
    <name type="scientific">Xenopus tropicalis</name>
    <name type="common">Western clawed frog</name>
    <name type="synonym">Silurana tropicalis</name>
    <dbReference type="NCBI Taxonomy" id="8364"/>
    <lineage>
        <taxon>Eukaryota</taxon>
        <taxon>Metazoa</taxon>
        <taxon>Chordata</taxon>
        <taxon>Craniata</taxon>
        <taxon>Vertebrata</taxon>
        <taxon>Euteleostomi</taxon>
        <taxon>Amphibia</taxon>
        <taxon>Batrachia</taxon>
        <taxon>Anura</taxon>
        <taxon>Pipoidea</taxon>
        <taxon>Pipidae</taxon>
        <taxon>Xenopodinae</taxon>
        <taxon>Xenopus</taxon>
        <taxon>Silurana</taxon>
    </lineage>
</organism>
<reference evidence="7" key="1">
    <citation type="submission" date="2004-06" db="EMBL/GenBank/DDBJ databases">
        <authorList>
            <consortium name="NIH - Xenopus Gene Collection (XGC) project"/>
        </authorList>
    </citation>
    <scope>NUCLEOTIDE SEQUENCE [LARGE SCALE MRNA]</scope>
    <source>
        <strain evidence="7">F6</strain>
    </source>
</reference>
<sequence length="518" mass="57156">MATLIRSKLSNVATSVSNKSQAKVSGMFARMGFQAATDEEALGFAHCDDLDMEHRQGLQMDILKTEVPSGDPTAEGDSHYQRDGTGPPSSASKDEGLCSELSSYGKPKITAWEAGWNVTNAIQGMFVLGLPYAILHGGYLGLFLIIFAAVVCCYTGKILIACLYEENEDGETVRVRDSYVDIANACCAPRFPKLGGRVVNVAQIIELVMTCILYVVVSGNLMYNSFPSLPISQKSWSIIATAMLLPCAFLKNLKAVSKFSLLCTLAHFVINVLVIAYCLSRARDWAWDKVKFYIDVKKFPISIGIIVFSYTSQIFLPSLEGNMQSPKEFHCMMNWTHIAACILKGLFALVAYLTWADETKEVITDNLPSTIRAVVNLFLVAKALLSYPLPFFAAVEVLEKSLFQEGARAFFPNCYGGDGRLKSWGLTLRCALVVFTLLMAIYVPHFALLMGLTGSLTGAGLCFLLPSLFHLKLLWRKLQWHQVFFDVSIFVIGSICSVSGFVHSLEGLIEAFRFNIED</sequence>
<name>VIAAT_XENTR</name>
<feature type="chain" id="PRO_0000341536" description="Vesicular inhibitory amino acid transporter">
    <location>
        <begin position="1"/>
        <end position="518"/>
    </location>
</feature>
<feature type="topological domain" description="Cytoplasmic" evidence="1">
    <location>
        <begin position="1"/>
        <end position="125"/>
    </location>
</feature>
<feature type="transmembrane region" description="Helical" evidence="5">
    <location>
        <begin position="126"/>
        <end position="146"/>
    </location>
</feature>
<feature type="topological domain" description="Lumenal, vesicle" evidence="1">
    <location>
        <begin position="147"/>
        <end position="197"/>
    </location>
</feature>
<feature type="transmembrane region" description="Helical" evidence="5">
    <location>
        <begin position="198"/>
        <end position="218"/>
    </location>
</feature>
<feature type="topological domain" description="Cytoplasmic" evidence="1">
    <location>
        <begin position="219"/>
        <end position="258"/>
    </location>
</feature>
<feature type="transmembrane region" description="Helical" evidence="5">
    <location>
        <begin position="259"/>
        <end position="279"/>
    </location>
</feature>
<feature type="topological domain" description="Lumenal, vesicle" evidence="1">
    <location>
        <begin position="280"/>
        <end position="298"/>
    </location>
</feature>
<feature type="transmembrane region" description="Helical" evidence="5">
    <location>
        <begin position="299"/>
        <end position="319"/>
    </location>
</feature>
<feature type="topological domain" description="Cytoplasmic" evidence="1">
    <location>
        <begin position="320"/>
        <end position="334"/>
    </location>
</feature>
<feature type="transmembrane region" description="Helical" evidence="5">
    <location>
        <begin position="335"/>
        <end position="355"/>
    </location>
</feature>
<feature type="topological domain" description="Lumenal, vesicle" evidence="1">
    <location>
        <begin position="356"/>
        <end position="376"/>
    </location>
</feature>
<feature type="transmembrane region" description="Helical" evidence="5">
    <location>
        <begin position="377"/>
        <end position="397"/>
    </location>
</feature>
<feature type="topological domain" description="Cytoplasmic" evidence="1">
    <location>
        <begin position="398"/>
        <end position="431"/>
    </location>
</feature>
<feature type="transmembrane region" description="Helical" evidence="5">
    <location>
        <begin position="432"/>
        <end position="452"/>
    </location>
</feature>
<feature type="topological domain" description="Lumenal, vesicle" evidence="1">
    <location>
        <begin position="453"/>
        <end position="454"/>
    </location>
</feature>
<feature type="transmembrane region" description="Helical" evidence="5">
    <location>
        <begin position="455"/>
        <end position="475"/>
    </location>
</feature>
<feature type="topological domain" description="Cytoplasmic" evidence="1">
    <location>
        <begin position="476"/>
        <end position="482"/>
    </location>
</feature>
<feature type="transmembrane region" description="Helical" evidence="5">
    <location>
        <begin position="483"/>
        <end position="503"/>
    </location>
</feature>
<feature type="topological domain" description="Lumenal, vesicle" evidence="1">
    <location>
        <begin position="504"/>
        <end position="518"/>
    </location>
</feature>
<feature type="region of interest" description="Disordered" evidence="6">
    <location>
        <begin position="66"/>
        <end position="98"/>
    </location>
</feature>
<protein>
    <recommendedName>
        <fullName evidence="4">Vesicular inhibitory amino acid transporter</fullName>
    </recommendedName>
    <alternativeName>
        <fullName>GABA and glycine transporter</fullName>
    </alternativeName>
    <alternativeName>
        <fullName>Solute carrier family 32 member 1</fullName>
    </alternativeName>
    <alternativeName>
        <fullName>Vesicular GABA transporter</fullName>
    </alternativeName>
</protein>
<dbReference type="EMBL" id="BC075429">
    <property type="protein sequence ID" value="AAH75429.1"/>
    <property type="molecule type" value="mRNA"/>
</dbReference>
<dbReference type="RefSeq" id="NP_001004943.1">
    <property type="nucleotide sequence ID" value="NM_001004943.1"/>
</dbReference>
<dbReference type="RefSeq" id="XP_012827085.1">
    <property type="nucleotide sequence ID" value="XM_012971631.3"/>
</dbReference>
<dbReference type="RefSeq" id="XP_012827086.1">
    <property type="nucleotide sequence ID" value="XM_012971632.3"/>
</dbReference>
<dbReference type="SMR" id="Q6DIV6"/>
<dbReference type="FunCoup" id="Q6DIV6">
    <property type="interactions" value="305"/>
</dbReference>
<dbReference type="STRING" id="8364.ENSXETP00000039619"/>
<dbReference type="PaxDb" id="8364-ENSXETP00000054324"/>
<dbReference type="DNASU" id="448348"/>
<dbReference type="GeneID" id="448348"/>
<dbReference type="KEGG" id="xtr:448348"/>
<dbReference type="AGR" id="Xenbase:XB-GENE-489830"/>
<dbReference type="CTD" id="140679"/>
<dbReference type="Xenbase" id="XB-GENE-489830">
    <property type="gene designation" value="slc32a1"/>
</dbReference>
<dbReference type="eggNOG" id="KOG4303">
    <property type="taxonomic scope" value="Eukaryota"/>
</dbReference>
<dbReference type="HOGENOM" id="CLU_036432_0_0_1"/>
<dbReference type="InParanoid" id="Q6DIV6"/>
<dbReference type="OMA" id="MKWTHIA"/>
<dbReference type="OrthoDB" id="6021076at2759"/>
<dbReference type="PhylomeDB" id="Q6DIV6"/>
<dbReference type="TreeFam" id="TF312818"/>
<dbReference type="Proteomes" id="UP000008143">
    <property type="component" value="Chromosome 10"/>
</dbReference>
<dbReference type="Bgee" id="ENSXETG00000025497">
    <property type="expression patterns" value="Expressed in brain and 2 other cell types or tissues"/>
</dbReference>
<dbReference type="GO" id="GO:0042995">
    <property type="term" value="C:cell projection"/>
    <property type="evidence" value="ECO:0007669"/>
    <property type="project" value="UniProtKB-KW"/>
</dbReference>
<dbReference type="GO" id="GO:0030659">
    <property type="term" value="C:cytoplasmic vesicle membrane"/>
    <property type="evidence" value="ECO:0007669"/>
    <property type="project" value="UniProtKB-SubCell"/>
</dbReference>
<dbReference type="GO" id="GO:0098793">
    <property type="term" value="C:presynapse"/>
    <property type="evidence" value="ECO:0000250"/>
    <property type="project" value="UniProtKB"/>
</dbReference>
<dbReference type="GO" id="GO:0008021">
    <property type="term" value="C:synaptic vesicle"/>
    <property type="evidence" value="ECO:0000250"/>
    <property type="project" value="UniProtKB"/>
</dbReference>
<dbReference type="GO" id="GO:0015185">
    <property type="term" value="F:gamma-aminobutyric acid transmembrane transporter activity"/>
    <property type="evidence" value="ECO:0000250"/>
    <property type="project" value="UniProtKB"/>
</dbReference>
<dbReference type="GO" id="GO:0140800">
    <property type="term" value="F:gamma-aminobutyric acid:proton antiporter activity"/>
    <property type="evidence" value="ECO:0000250"/>
    <property type="project" value="UniProtKB"/>
</dbReference>
<dbReference type="GO" id="GO:0015187">
    <property type="term" value="F:glycine transmembrane transporter activity"/>
    <property type="evidence" value="ECO:0000250"/>
    <property type="project" value="UniProtKB"/>
</dbReference>
<dbReference type="GO" id="GO:0140799">
    <property type="term" value="F:glycine:proton antiporter activity"/>
    <property type="evidence" value="ECO:0000250"/>
    <property type="project" value="UniProtKB"/>
</dbReference>
<dbReference type="GO" id="GO:0001762">
    <property type="term" value="P:beta-alanine transport"/>
    <property type="evidence" value="ECO:0000250"/>
    <property type="project" value="UniProtKB"/>
</dbReference>
<dbReference type="GO" id="GO:0051939">
    <property type="term" value="P:gamma-aminobutyric acid import"/>
    <property type="evidence" value="ECO:0000250"/>
    <property type="project" value="UniProtKB"/>
</dbReference>
<dbReference type="GO" id="GO:0015812">
    <property type="term" value="P:gamma-aminobutyric acid transport"/>
    <property type="evidence" value="ECO:0000250"/>
    <property type="project" value="UniProtKB"/>
</dbReference>
<dbReference type="GO" id="GO:0015816">
    <property type="term" value="P:glycine transport"/>
    <property type="evidence" value="ECO:0000250"/>
    <property type="project" value="UniProtKB"/>
</dbReference>
<dbReference type="GO" id="GO:0006836">
    <property type="term" value="P:neurotransmitter transport"/>
    <property type="evidence" value="ECO:0007669"/>
    <property type="project" value="UniProtKB-KW"/>
</dbReference>
<dbReference type="FunFam" id="1.20.1740.10:FF:000062">
    <property type="entry name" value="Vesicular inhibitory amino acid transporter"/>
    <property type="match status" value="1"/>
</dbReference>
<dbReference type="InterPro" id="IPR013057">
    <property type="entry name" value="AA_transpt_TM"/>
</dbReference>
<dbReference type="PANTHER" id="PTHR22950">
    <property type="entry name" value="AMINO ACID TRANSPORTER"/>
    <property type="match status" value="1"/>
</dbReference>
<dbReference type="PANTHER" id="PTHR22950:SF689">
    <property type="entry name" value="VESICULAR INHIBITORY AMINO ACID TRANSPORTER"/>
    <property type="match status" value="1"/>
</dbReference>
<dbReference type="Pfam" id="PF01490">
    <property type="entry name" value="Aa_trans"/>
    <property type="match status" value="1"/>
</dbReference>